<evidence type="ECO:0000256" key="1">
    <source>
        <dbReference type="SAM" id="MobiDB-lite"/>
    </source>
</evidence>
<evidence type="ECO:0000303" key="2">
    <source>
    </source>
</evidence>
<evidence type="ECO:0000305" key="3"/>
<comment type="alternative products">
    <event type="alternative splicing"/>
    <isoform>
        <id>Q9CYS6-1</id>
        <name>1</name>
        <sequence type="displayed"/>
    </isoform>
    <isoform>
        <id>Q9CYS6-2</id>
        <name>2</name>
        <sequence type="described" ref="VSP_040798"/>
    </isoform>
</comment>
<comment type="sequence caution" evidence="3">
    <conflict type="erroneous initiation">
        <sequence resource="EMBL-CDS" id="BAB28812"/>
    </conflict>
    <text>Truncated N-terminus.</text>
</comment>
<dbReference type="EMBL" id="BC137675">
    <property type="protein sequence ID" value="AAI37676.1"/>
    <property type="molecule type" value="mRNA"/>
</dbReference>
<dbReference type="EMBL" id="AK013367">
    <property type="protein sequence ID" value="BAB28812.1"/>
    <property type="status" value="ALT_INIT"/>
    <property type="molecule type" value="mRNA"/>
</dbReference>
<dbReference type="CCDS" id="CCDS48302.1">
    <molecule id="Q9CYS6-2"/>
</dbReference>
<dbReference type="CCDS" id="CCDS78641.1">
    <molecule id="Q9CYS6-1"/>
</dbReference>
<dbReference type="RefSeq" id="NP_001138464.1">
    <molecule id="Q9CYS6-2"/>
    <property type="nucleotide sequence ID" value="NM_001144992.2"/>
</dbReference>
<dbReference type="RefSeq" id="NP_001138465.1">
    <molecule id="Q9CYS6-1"/>
    <property type="nucleotide sequence ID" value="NM_001144993.2"/>
</dbReference>
<dbReference type="FunCoup" id="Q9CYS6">
    <property type="interactions" value="64"/>
</dbReference>
<dbReference type="IntAct" id="Q9CYS6">
    <property type="interactions" value="1"/>
</dbReference>
<dbReference type="MINT" id="Q9CYS6"/>
<dbReference type="iPTMnet" id="Q9CYS6"/>
<dbReference type="PhosphoSitePlus" id="Q9CYS6"/>
<dbReference type="SwissPalm" id="Q9CYS6"/>
<dbReference type="jPOST" id="Q9CYS6"/>
<dbReference type="PaxDb" id="10090-ENSMUSP00000131459"/>
<dbReference type="Antibodypedia" id="50518">
    <property type="antibodies" value="8 antibodies from 6 providers"/>
</dbReference>
<dbReference type="Ensembl" id="ENSMUST00000027429.11">
    <molecule id="Q9CYS6-1"/>
    <property type="protein sequence ID" value="ENSMUSP00000027429.6"/>
    <property type="gene ID" value="ENSMUSG00000026227.12"/>
</dbReference>
<dbReference type="Ensembl" id="ENSMUST00000165824.3">
    <molecule id="Q9CYS6-2"/>
    <property type="protein sequence ID" value="ENSMUSP00000131459.2"/>
    <property type="gene ID" value="ENSMUSG00000026227.12"/>
</dbReference>
<dbReference type="GeneID" id="72792"/>
<dbReference type="KEGG" id="mmu:72792"/>
<dbReference type="UCSC" id="uc011wog.1">
    <molecule id="Q9CYS6-1"/>
    <property type="organism name" value="mouse"/>
</dbReference>
<dbReference type="AGR" id="MGI:1920042"/>
<dbReference type="MGI" id="MGI:1920042">
    <property type="gene designation" value="2810459M11Rik"/>
</dbReference>
<dbReference type="VEuPathDB" id="HostDB:ENSMUSG00000026227"/>
<dbReference type="eggNOG" id="ENOG502S7XX">
    <property type="taxonomic scope" value="Eukaryota"/>
</dbReference>
<dbReference type="GeneTree" id="ENSGT00390000003006"/>
<dbReference type="HOGENOM" id="CLU_939971_0_0_1"/>
<dbReference type="InParanoid" id="Q9CYS6"/>
<dbReference type="OMA" id="IHTPAEP"/>
<dbReference type="OrthoDB" id="9909567at2759"/>
<dbReference type="TreeFam" id="TF339232"/>
<dbReference type="BioGRID-ORCS" id="72792">
    <property type="hits" value="5 hits in 75 CRISPR screens"/>
</dbReference>
<dbReference type="PRO" id="PR:Q9CYS6"/>
<dbReference type="Proteomes" id="UP000000589">
    <property type="component" value="Chromosome 1"/>
</dbReference>
<dbReference type="RNAct" id="Q9CYS6">
    <property type="molecule type" value="protein"/>
</dbReference>
<dbReference type="Bgee" id="ENSMUSG00000026227">
    <property type="expression patterns" value="Expressed in left lobe of liver and 107 other cell types or tissues"/>
</dbReference>
<dbReference type="ExpressionAtlas" id="Q9CYS6">
    <property type="expression patterns" value="baseline and differential"/>
</dbReference>
<dbReference type="InterPro" id="IPR027868">
    <property type="entry name" value="C2orf72-like_C"/>
</dbReference>
<dbReference type="PANTHER" id="PTHR35675">
    <property type="entry name" value="HYPOTHETICAL PROTEIN LOC100362216"/>
    <property type="match status" value="1"/>
</dbReference>
<dbReference type="PANTHER" id="PTHR35675:SF1">
    <property type="entry name" value="RIKEN CDNA 2810459M11 GENE"/>
    <property type="match status" value="1"/>
</dbReference>
<dbReference type="Pfam" id="PF15443">
    <property type="entry name" value="DUF4630"/>
    <property type="match status" value="1"/>
</dbReference>
<protein>
    <recommendedName>
        <fullName>Uncharacterized protein C2orf72 homolog</fullName>
    </recommendedName>
</protein>
<feature type="chain" id="PRO_0000339301" description="Uncharacterized protein C2orf72 homolog">
    <location>
        <begin position="1"/>
        <end position="286"/>
    </location>
</feature>
<feature type="region of interest" description="Disordered" evidence="1">
    <location>
        <begin position="59"/>
        <end position="89"/>
    </location>
</feature>
<feature type="region of interest" description="Disordered" evidence="1">
    <location>
        <begin position="225"/>
        <end position="286"/>
    </location>
</feature>
<feature type="compositionally biased region" description="Low complexity" evidence="1">
    <location>
        <begin position="69"/>
        <end position="85"/>
    </location>
</feature>
<feature type="splice variant" id="VSP_040798" description="In isoform 2." evidence="2">
    <original>P</original>
    <variation>PA</variation>
    <location>
        <position position="203"/>
    </location>
</feature>
<keyword id="KW-0025">Alternative splicing</keyword>
<keyword id="KW-1185">Reference proteome</keyword>
<accession>Q9CYS6</accession>
<accession>B2RPZ8</accession>
<proteinExistence type="evidence at protein level"/>
<sequence>MESELEALAPRPASPAEPPFQALVEAAGGRGQVLLVGELWEREQSRALLRDFAGAVFPPESAPGKPGCAEAESAGTAAATESHGAPGAKAERAIRSPLVFVLCRVGSLTSRESRRRLREMLRDVRDRRCEGAALVGVLVADTGADDARAPELQLLETLLRTVFGRQVGGPVQAAAFRPGCPASSLAVQEAACRALQAAGPGRPEGAWERPARTGLLTCFSWGPRRQRKNRGVTSSQGPAQEHLQFSEEELALTPVFPNGDCEDRGNGSRAQDGGVHIPPDPPEDTR</sequence>
<reference key="1">
    <citation type="journal article" date="2004" name="Genome Res.">
        <title>The status, quality, and expansion of the NIH full-length cDNA project: the Mammalian Gene Collection (MGC).</title>
        <authorList>
            <consortium name="The MGC Project Team"/>
        </authorList>
    </citation>
    <scope>NUCLEOTIDE SEQUENCE [LARGE SCALE MRNA] (ISOFORM 1)</scope>
    <source>
        <tissue>Brain</tissue>
    </source>
</reference>
<reference key="2">
    <citation type="journal article" date="2005" name="Science">
        <title>The transcriptional landscape of the mammalian genome.</title>
        <authorList>
            <person name="Carninci P."/>
            <person name="Kasukawa T."/>
            <person name="Katayama S."/>
            <person name="Gough J."/>
            <person name="Frith M.C."/>
            <person name="Maeda N."/>
            <person name="Oyama R."/>
            <person name="Ravasi T."/>
            <person name="Lenhard B."/>
            <person name="Wells C."/>
            <person name="Kodzius R."/>
            <person name="Shimokawa K."/>
            <person name="Bajic V.B."/>
            <person name="Brenner S.E."/>
            <person name="Batalov S."/>
            <person name="Forrest A.R."/>
            <person name="Zavolan M."/>
            <person name="Davis M.J."/>
            <person name="Wilming L.G."/>
            <person name="Aidinis V."/>
            <person name="Allen J.E."/>
            <person name="Ambesi-Impiombato A."/>
            <person name="Apweiler R."/>
            <person name="Aturaliya R.N."/>
            <person name="Bailey T.L."/>
            <person name="Bansal M."/>
            <person name="Baxter L."/>
            <person name="Beisel K.W."/>
            <person name="Bersano T."/>
            <person name="Bono H."/>
            <person name="Chalk A.M."/>
            <person name="Chiu K.P."/>
            <person name="Choudhary V."/>
            <person name="Christoffels A."/>
            <person name="Clutterbuck D.R."/>
            <person name="Crowe M.L."/>
            <person name="Dalla E."/>
            <person name="Dalrymple B.P."/>
            <person name="de Bono B."/>
            <person name="Della Gatta G."/>
            <person name="di Bernardo D."/>
            <person name="Down T."/>
            <person name="Engstrom P."/>
            <person name="Fagiolini M."/>
            <person name="Faulkner G."/>
            <person name="Fletcher C.F."/>
            <person name="Fukushima T."/>
            <person name="Furuno M."/>
            <person name="Futaki S."/>
            <person name="Gariboldi M."/>
            <person name="Georgii-Hemming P."/>
            <person name="Gingeras T.R."/>
            <person name="Gojobori T."/>
            <person name="Green R.E."/>
            <person name="Gustincich S."/>
            <person name="Harbers M."/>
            <person name="Hayashi Y."/>
            <person name="Hensch T.K."/>
            <person name="Hirokawa N."/>
            <person name="Hill D."/>
            <person name="Huminiecki L."/>
            <person name="Iacono M."/>
            <person name="Ikeo K."/>
            <person name="Iwama A."/>
            <person name="Ishikawa T."/>
            <person name="Jakt M."/>
            <person name="Kanapin A."/>
            <person name="Katoh M."/>
            <person name="Kawasawa Y."/>
            <person name="Kelso J."/>
            <person name="Kitamura H."/>
            <person name="Kitano H."/>
            <person name="Kollias G."/>
            <person name="Krishnan S.P."/>
            <person name="Kruger A."/>
            <person name="Kummerfeld S.K."/>
            <person name="Kurochkin I.V."/>
            <person name="Lareau L.F."/>
            <person name="Lazarevic D."/>
            <person name="Lipovich L."/>
            <person name="Liu J."/>
            <person name="Liuni S."/>
            <person name="McWilliam S."/>
            <person name="Madan Babu M."/>
            <person name="Madera M."/>
            <person name="Marchionni L."/>
            <person name="Matsuda H."/>
            <person name="Matsuzawa S."/>
            <person name="Miki H."/>
            <person name="Mignone F."/>
            <person name="Miyake S."/>
            <person name="Morris K."/>
            <person name="Mottagui-Tabar S."/>
            <person name="Mulder N."/>
            <person name="Nakano N."/>
            <person name="Nakauchi H."/>
            <person name="Ng P."/>
            <person name="Nilsson R."/>
            <person name="Nishiguchi S."/>
            <person name="Nishikawa S."/>
            <person name="Nori F."/>
            <person name="Ohara O."/>
            <person name="Okazaki Y."/>
            <person name="Orlando V."/>
            <person name="Pang K.C."/>
            <person name="Pavan W.J."/>
            <person name="Pavesi G."/>
            <person name="Pesole G."/>
            <person name="Petrovsky N."/>
            <person name="Piazza S."/>
            <person name="Reed J."/>
            <person name="Reid J.F."/>
            <person name="Ring B.Z."/>
            <person name="Ringwald M."/>
            <person name="Rost B."/>
            <person name="Ruan Y."/>
            <person name="Salzberg S.L."/>
            <person name="Sandelin A."/>
            <person name="Schneider C."/>
            <person name="Schoenbach C."/>
            <person name="Sekiguchi K."/>
            <person name="Semple C.A."/>
            <person name="Seno S."/>
            <person name="Sessa L."/>
            <person name="Sheng Y."/>
            <person name="Shibata Y."/>
            <person name="Shimada H."/>
            <person name="Shimada K."/>
            <person name="Silva D."/>
            <person name="Sinclair B."/>
            <person name="Sperling S."/>
            <person name="Stupka E."/>
            <person name="Sugiura K."/>
            <person name="Sultana R."/>
            <person name="Takenaka Y."/>
            <person name="Taki K."/>
            <person name="Tammoja K."/>
            <person name="Tan S.L."/>
            <person name="Tang S."/>
            <person name="Taylor M.S."/>
            <person name="Tegner J."/>
            <person name="Teichmann S.A."/>
            <person name="Ueda H.R."/>
            <person name="van Nimwegen E."/>
            <person name="Verardo R."/>
            <person name="Wei C.L."/>
            <person name="Yagi K."/>
            <person name="Yamanishi H."/>
            <person name="Zabarovsky E."/>
            <person name="Zhu S."/>
            <person name="Zimmer A."/>
            <person name="Hide W."/>
            <person name="Bult C."/>
            <person name="Grimmond S.M."/>
            <person name="Teasdale R.D."/>
            <person name="Liu E.T."/>
            <person name="Brusic V."/>
            <person name="Quackenbush J."/>
            <person name="Wahlestedt C."/>
            <person name="Mattick J.S."/>
            <person name="Hume D.A."/>
            <person name="Kai C."/>
            <person name="Sasaki D."/>
            <person name="Tomaru Y."/>
            <person name="Fukuda S."/>
            <person name="Kanamori-Katayama M."/>
            <person name="Suzuki M."/>
            <person name="Aoki J."/>
            <person name="Arakawa T."/>
            <person name="Iida J."/>
            <person name="Imamura K."/>
            <person name="Itoh M."/>
            <person name="Kato T."/>
            <person name="Kawaji H."/>
            <person name="Kawagashira N."/>
            <person name="Kawashima T."/>
            <person name="Kojima M."/>
            <person name="Kondo S."/>
            <person name="Konno H."/>
            <person name="Nakano K."/>
            <person name="Ninomiya N."/>
            <person name="Nishio T."/>
            <person name="Okada M."/>
            <person name="Plessy C."/>
            <person name="Shibata K."/>
            <person name="Shiraki T."/>
            <person name="Suzuki S."/>
            <person name="Tagami M."/>
            <person name="Waki K."/>
            <person name="Watahiki A."/>
            <person name="Okamura-Oho Y."/>
            <person name="Suzuki H."/>
            <person name="Kawai J."/>
            <person name="Hayashizaki Y."/>
        </authorList>
    </citation>
    <scope>NUCLEOTIDE SEQUENCE [LARGE SCALE MRNA] OF 103-286 (ISOFORM 2)</scope>
    <source>
        <strain>C57BL/6J</strain>
    </source>
</reference>
<reference key="3">
    <citation type="journal article" date="2010" name="Cell">
        <title>A tissue-specific atlas of mouse protein phosphorylation and expression.</title>
        <authorList>
            <person name="Huttlin E.L."/>
            <person name="Jedrychowski M.P."/>
            <person name="Elias J.E."/>
            <person name="Goswami T."/>
            <person name="Rad R."/>
            <person name="Beausoleil S.A."/>
            <person name="Villen J."/>
            <person name="Haas W."/>
            <person name="Sowa M.E."/>
            <person name="Gygi S.P."/>
        </authorList>
    </citation>
    <scope>IDENTIFICATION BY MASS SPECTROMETRY [LARGE SCALE ANALYSIS]</scope>
    <source>
        <tissue>Liver</tissue>
    </source>
</reference>
<organism>
    <name type="scientific">Mus musculus</name>
    <name type="common">Mouse</name>
    <dbReference type="NCBI Taxonomy" id="10090"/>
    <lineage>
        <taxon>Eukaryota</taxon>
        <taxon>Metazoa</taxon>
        <taxon>Chordata</taxon>
        <taxon>Craniata</taxon>
        <taxon>Vertebrata</taxon>
        <taxon>Euteleostomi</taxon>
        <taxon>Mammalia</taxon>
        <taxon>Eutheria</taxon>
        <taxon>Euarchontoglires</taxon>
        <taxon>Glires</taxon>
        <taxon>Rodentia</taxon>
        <taxon>Myomorpha</taxon>
        <taxon>Muroidea</taxon>
        <taxon>Muridae</taxon>
        <taxon>Murinae</taxon>
        <taxon>Mus</taxon>
        <taxon>Mus</taxon>
    </lineage>
</organism>
<name>CB072_MOUSE</name>